<name>CLA3_AEDAE</name>
<dbReference type="RefSeq" id="XP_021707806.1">
    <property type="nucleotide sequence ID" value="XM_021852114.1"/>
</dbReference>
<dbReference type="SMR" id="A0A6I8TBG6"/>
<dbReference type="EnsemblMetazoa" id="AAEL005718-RB">
    <property type="protein sequence ID" value="AAEL005718-PB"/>
    <property type="gene ID" value="AAEL005718"/>
</dbReference>
<dbReference type="GeneID" id="5566950"/>
<dbReference type="InParanoid" id="A0A6I8TBG6"/>
<dbReference type="OrthoDB" id="6656697at2759"/>
<dbReference type="Proteomes" id="UP000008820">
    <property type="component" value="Chromosome 3"/>
</dbReference>
<dbReference type="GO" id="GO:0016020">
    <property type="term" value="C:membrane"/>
    <property type="evidence" value="ECO:0007669"/>
    <property type="project" value="UniProtKB-SubCell"/>
</dbReference>
<dbReference type="GO" id="GO:0004252">
    <property type="term" value="F:serine-type endopeptidase activity"/>
    <property type="evidence" value="ECO:0007669"/>
    <property type="project" value="InterPro"/>
</dbReference>
<dbReference type="GO" id="GO:0006508">
    <property type="term" value="P:proteolysis"/>
    <property type="evidence" value="ECO:0007669"/>
    <property type="project" value="InterPro"/>
</dbReference>
<dbReference type="CDD" id="cd00190">
    <property type="entry name" value="Tryp_SPc"/>
    <property type="match status" value="1"/>
</dbReference>
<dbReference type="FunFam" id="2.40.10.10:FF:000002">
    <property type="entry name" value="Transmembrane protease serine"/>
    <property type="match status" value="1"/>
</dbReference>
<dbReference type="Gene3D" id="2.40.10.10">
    <property type="entry name" value="Trypsin-like serine proteases"/>
    <property type="match status" value="1"/>
</dbReference>
<dbReference type="InterPro" id="IPR009003">
    <property type="entry name" value="Peptidase_S1_PA"/>
</dbReference>
<dbReference type="InterPro" id="IPR043504">
    <property type="entry name" value="Peptidase_S1_PA_chymotrypsin"/>
</dbReference>
<dbReference type="InterPro" id="IPR001314">
    <property type="entry name" value="Peptidase_S1A"/>
</dbReference>
<dbReference type="InterPro" id="IPR041515">
    <property type="entry name" value="PPAF-2-like_Clip"/>
</dbReference>
<dbReference type="InterPro" id="IPR051487">
    <property type="entry name" value="Ser/Thr_Proteases_Immune/Dev"/>
</dbReference>
<dbReference type="InterPro" id="IPR001254">
    <property type="entry name" value="Trypsin_dom"/>
</dbReference>
<dbReference type="PANTHER" id="PTHR24256">
    <property type="entry name" value="TRYPTASE-RELATED"/>
    <property type="match status" value="1"/>
</dbReference>
<dbReference type="Pfam" id="PF18322">
    <property type="entry name" value="CLIP_1"/>
    <property type="match status" value="1"/>
</dbReference>
<dbReference type="Pfam" id="PF00089">
    <property type="entry name" value="Trypsin"/>
    <property type="match status" value="1"/>
</dbReference>
<dbReference type="PRINTS" id="PR00722">
    <property type="entry name" value="CHYMOTRYPSIN"/>
</dbReference>
<dbReference type="SMART" id="SM00020">
    <property type="entry name" value="Tryp_SPc"/>
    <property type="match status" value="1"/>
</dbReference>
<dbReference type="SUPFAM" id="SSF50494">
    <property type="entry name" value="Trypsin-like serine proteases"/>
    <property type="match status" value="1"/>
</dbReference>
<dbReference type="PROSITE" id="PS50240">
    <property type="entry name" value="TRYPSIN_DOM"/>
    <property type="match status" value="1"/>
</dbReference>
<proteinExistence type="evidence at transcript level"/>
<sequence length="472" mass="49649">MQSENYCGLLALRLLVSYHLKIHSQLDGINGNAFSIKIIVTHLFKRITRCISFVMCAIYYLQLYIKAWSSMKRYRKSLPALGVLILLGTTWTPVHTYAQIGFPDDKPAGGGGGDLTRQLATNVSTGIITGILNGTVPLQTALPILGFTNSTNQTCVCVPSGRCATTTVPTDGSGMIDVRIVTSQTSSPISPTPNIVTPPTCAAGLDRCCYPGPFQCGLQYPAVAAAKAPAAGQAYYGEYPWQAVLLGPGDIYVGSGALIDPLNVITAAHRISEYVSGARALRVRLGEWDASAASEPIPALEYTVSKFFVHPSYNAANLQNDIAMLRLSSAVPLGATPTITTACLPATSFVGTTCWVSGWGKNDFVSGSYQAIQKKVDVAVRSPADCQTALRTTRLGSTFVLDATSFVCAGGEAGKDACTGDGGSPLVCSLGGRYFVVGLVAWGIGCGTSNIPGVYVNVASYVPWITSTVSLA</sequence>
<protein>
    <recommendedName>
        <fullName evidence="6">Inactive CLIP domain-containing serine protease A3</fullName>
        <shortName evidence="5">CLIPA3</shortName>
    </recommendedName>
</protein>
<organism evidence="7">
    <name type="scientific">Aedes aegypti</name>
    <name type="common">Yellowfever mosquito</name>
    <name type="synonym">Culex aegypti</name>
    <dbReference type="NCBI Taxonomy" id="7159"/>
    <lineage>
        <taxon>Eukaryota</taxon>
        <taxon>Metazoa</taxon>
        <taxon>Ecdysozoa</taxon>
        <taxon>Arthropoda</taxon>
        <taxon>Hexapoda</taxon>
        <taxon>Insecta</taxon>
        <taxon>Pterygota</taxon>
        <taxon>Neoptera</taxon>
        <taxon>Endopterygota</taxon>
        <taxon>Diptera</taxon>
        <taxon>Nematocera</taxon>
        <taxon>Culicoidea</taxon>
        <taxon>Culicidae</taxon>
        <taxon>Culicinae</taxon>
        <taxon>Aedini</taxon>
        <taxon>Aedes</taxon>
        <taxon>Stegomyia</taxon>
    </lineage>
</organism>
<comment type="function">
    <text evidence="4 5">Probable inactive serine protease (PubMed:24131723). Induces migration of cultured mouse embryonic fibroblasts (PubMed:24131723).</text>
</comment>
<comment type="function">
    <text evidence="4">(Microbial infection) Promotes dengue virus type 2 replication in the host.</text>
</comment>
<comment type="subcellular location">
    <subcellularLocation>
        <location evidence="1">Membrane</location>
        <topology evidence="1">Multi-pass membrane protein</topology>
    </subcellularLocation>
</comment>
<comment type="tissue specificity">
    <text evidence="4">Expressed at highest levels in head and salivary gland (PubMed:24131723). Expressed in ovary and carcass (PubMed:24131723). Minimal expression in midgut (PubMed:24131723).</text>
</comment>
<comment type="disruption phenotype">
    <text evidence="4">Salivary gland extracts from mosquitoes with RNAi-mediated knockdown fail to induce migration of NIH 3T3 mouse embryonic fibroblasts.</text>
</comment>
<comment type="disruption phenotype">
    <text evidence="4">(Microbial infection) Salivary gland extracts from mosquitoes with RNAi-mediated knockdown enhance dengue virus type 2 infectivity in the host cells to a lesser degree.</text>
</comment>
<comment type="similarity">
    <text evidence="6">Belongs to the peptidase S1 family. CLIP subfamily.</text>
</comment>
<comment type="caution">
    <text evidence="5">Although it belongs to peptidase S1 family, it is likely that the protein is non-catalytic due to a glycine substitution at the putative catalytic serine residue.</text>
</comment>
<feature type="chain" id="PRO_0000461110" description="Inactive CLIP domain-containing serine protease A3">
    <location>
        <begin position="1"/>
        <end position="472"/>
    </location>
</feature>
<feature type="transmembrane region" description="Helical" evidence="1">
    <location>
        <begin position="51"/>
        <end position="71"/>
    </location>
</feature>
<feature type="transmembrane region" description="Helical" evidence="1">
    <location>
        <begin position="78"/>
        <end position="98"/>
    </location>
</feature>
<feature type="domain" description="Peptidase S1" evidence="2">
    <location>
        <begin position="223"/>
        <end position="470"/>
    </location>
</feature>
<feature type="glycosylation site" description="N-linked (GlcNAc...) asparagine" evidence="3">
    <location>
        <position position="122"/>
    </location>
</feature>
<feature type="glycosylation site" description="N-linked (GlcNAc...) asparagine" evidence="3">
    <location>
        <position position="133"/>
    </location>
</feature>
<feature type="glycosylation site" description="N-linked (GlcNAc...) asparagine" evidence="3">
    <location>
        <position position="149"/>
    </location>
</feature>
<feature type="glycosylation site" description="N-linked (GlcNAc...) asparagine" evidence="3">
    <location>
        <position position="152"/>
    </location>
</feature>
<feature type="disulfide bond" evidence="2">
    <location>
        <begin position="354"/>
        <end position="428"/>
    </location>
</feature>
<feature type="disulfide bond" evidence="2">
    <location>
        <begin position="386"/>
        <end position="408"/>
    </location>
</feature>
<feature type="disulfide bond" evidence="2">
    <location>
        <begin position="418"/>
        <end position="446"/>
    </location>
</feature>
<evidence type="ECO:0000255" key="1"/>
<evidence type="ECO:0000255" key="2">
    <source>
        <dbReference type="PROSITE-ProRule" id="PRU00274"/>
    </source>
</evidence>
<evidence type="ECO:0000255" key="3">
    <source>
        <dbReference type="PROSITE-ProRule" id="PRU00498"/>
    </source>
</evidence>
<evidence type="ECO:0000269" key="4">
    <source>
    </source>
</evidence>
<evidence type="ECO:0000303" key="5">
    <source>
    </source>
</evidence>
<evidence type="ECO:0000305" key="6"/>
<evidence type="ECO:0000312" key="7">
    <source>
        <dbReference type="Proteomes" id="UP000008820"/>
    </source>
</evidence>
<accession>A0A6I8TBG6</accession>
<keyword id="KW-1015">Disulfide bond</keyword>
<keyword id="KW-0325">Glycoprotein</keyword>
<keyword id="KW-0472">Membrane</keyword>
<keyword id="KW-1185">Reference proteome</keyword>
<keyword id="KW-0812">Transmembrane</keyword>
<keyword id="KW-1133">Transmembrane helix</keyword>
<reference evidence="7" key="1">
    <citation type="journal article" date="2018" name="Nature">
        <title>Improved reference genome of Aedes aegypti informs arbovirus vector control.</title>
        <authorList>
            <person name="Matthews B.J."/>
            <person name="Dudchenko O."/>
            <person name="Kingan S.B."/>
            <person name="Koren S."/>
            <person name="Antoshechkin I."/>
            <person name="Crawford J.E."/>
            <person name="Glassford W.J."/>
            <person name="Herre M."/>
            <person name="Redmond S.N."/>
            <person name="Rose N.H."/>
            <person name="Weedall G.D."/>
            <person name="Wu Y."/>
            <person name="Batra S.S."/>
            <person name="Brito-Sierra C.A."/>
            <person name="Buckingham S.D."/>
            <person name="Campbell C.L."/>
            <person name="Chan S."/>
            <person name="Cox E."/>
            <person name="Evans B.R."/>
            <person name="Fansiri T."/>
            <person name="Filipovic I."/>
            <person name="Fontaine A."/>
            <person name="Gloria-Soria A."/>
            <person name="Hall R."/>
            <person name="Joardar V.S."/>
            <person name="Jones A.K."/>
            <person name="Kay R.G.G."/>
            <person name="Kodali V.K."/>
            <person name="Lee J."/>
            <person name="Lycett G.J."/>
            <person name="Mitchell S.N."/>
            <person name="Muehling J."/>
            <person name="Murphy M.R."/>
            <person name="Omer A.D."/>
            <person name="Partridge F.A."/>
            <person name="Peluso P."/>
            <person name="Aiden A.P."/>
            <person name="Ramasamy V."/>
            <person name="Rasic G."/>
            <person name="Roy S."/>
            <person name="Saavedra-Rodriguez K."/>
            <person name="Sharan S."/>
            <person name="Sharma A."/>
            <person name="Smith M.L."/>
            <person name="Turner J."/>
            <person name="Weakley A.M."/>
            <person name="Zhao Z."/>
            <person name="Akbari O.S."/>
            <person name="Black W.C. IV"/>
            <person name="Cao H."/>
            <person name="Darby A.C."/>
            <person name="Hill C.A."/>
            <person name="Johnston J.S."/>
            <person name="Murphy T.D."/>
            <person name="Raikhel A.S."/>
            <person name="Sattelle D.B."/>
            <person name="Sharakhov I.V."/>
            <person name="White B.J."/>
            <person name="Zhao L."/>
            <person name="Aiden E.L."/>
            <person name="Mann R.S."/>
            <person name="Lambrechts L."/>
            <person name="Powell J.R."/>
            <person name="Sharakhova M.V."/>
            <person name="Tu Z."/>
            <person name="Robertson H.M."/>
            <person name="McBride C.S."/>
            <person name="Hastie A.R."/>
            <person name="Korlach J."/>
            <person name="Neafsey D.E."/>
            <person name="Phillippy A.M."/>
            <person name="Vosshall L.B."/>
        </authorList>
    </citation>
    <scope>NUCLEOTIDE SEQUENCE [LARGE SCALE GENOMIC DNA]</scope>
    <source>
        <strain evidence="7">LVP_AGWG</strain>
    </source>
</reference>
<reference evidence="6" key="2">
    <citation type="journal article" date="2014" name="J. Virol.">
        <title>Mosquito saliva serine protease enhances dissemination of dengue virus into the mammalian host.</title>
        <authorList>
            <person name="Conway M.J."/>
            <person name="Watson A.M."/>
            <person name="Colpitts T.M."/>
            <person name="Dragovic S.M."/>
            <person name="Li Z."/>
            <person name="Wang P."/>
            <person name="Feitosa F."/>
            <person name="Shepherd D.T."/>
            <person name="Ryman K.D."/>
            <person name="Klimstra W.B."/>
            <person name="Anderson J.F."/>
            <person name="Fikrig E."/>
        </authorList>
    </citation>
    <scope>FUNCTION</scope>
    <scope>FUNCTION (MICROBIAL INFECTION)</scope>
    <scope>TISSUE SPECIFICITY</scope>
    <scope>DISRUPTION PHENOTYPE</scope>
    <scope>DISRUPTION PHENOTYPE (MICROBIAL INFECTION)</scope>
</reference>